<evidence type="ECO:0000255" key="1">
    <source>
        <dbReference type="HAMAP-Rule" id="MF_01665"/>
    </source>
</evidence>
<reference key="1">
    <citation type="journal article" date="2002" name="DNA Res.">
        <title>Complete genomic sequence of nitrogen-fixing symbiotic bacterium Bradyrhizobium japonicum USDA110.</title>
        <authorList>
            <person name="Kaneko T."/>
            <person name="Nakamura Y."/>
            <person name="Sato S."/>
            <person name="Minamisawa K."/>
            <person name="Uchiumi T."/>
            <person name="Sasamoto S."/>
            <person name="Watanabe A."/>
            <person name="Idesawa K."/>
            <person name="Iriguchi M."/>
            <person name="Kawashima K."/>
            <person name="Kohara M."/>
            <person name="Matsumoto M."/>
            <person name="Shimpo S."/>
            <person name="Tsuruoka H."/>
            <person name="Wada T."/>
            <person name="Yamada M."/>
            <person name="Tabata S."/>
        </authorList>
    </citation>
    <scope>NUCLEOTIDE SEQUENCE [LARGE SCALE GENOMIC DNA]</scope>
    <source>
        <strain>JCM 10833 / BCRC 13528 / IAM 13628 / NBRC 14792 / USDA 110</strain>
    </source>
</reference>
<accession>Q89KD9</accession>
<proteinExistence type="inferred from homology"/>
<sequence>MTTISAPSEPYRAVRWWLISVAALIALMVLVGGATRLTESGLSIVEWKLVTGSLPPLSAAQWTEAFEAYKKIPQYRELNAGMSLSEFKEIFWWEWSHRLLGRFIGVAYLLPFLFFLWRGGLSRELKRRLWLLFALGGLQGAVGWWMVASGLSERVEVSQYRLATHLVLALLIFAGIVWTVRRLKERAQIAAPARLRFTSALLLVVTFVQIYLGALVAGLRAGRAYNTWPEIDGALIPSAERLWFETPWWRNMFDNVLTVQFEHRMTAYALFVLAALHAFDAVRSRAGLAASGALWLFAAVSLQAVLGILTLLNQVPIGLALAHQAVAIAVLTLAVMQTERLASRQSAETQPRVVPVSQPG</sequence>
<organism>
    <name type="scientific">Bradyrhizobium diazoefficiens (strain JCM 10833 / BCRC 13528 / IAM 13628 / NBRC 14792 / USDA 110)</name>
    <dbReference type="NCBI Taxonomy" id="224911"/>
    <lineage>
        <taxon>Bacteria</taxon>
        <taxon>Pseudomonadati</taxon>
        <taxon>Pseudomonadota</taxon>
        <taxon>Alphaproteobacteria</taxon>
        <taxon>Hyphomicrobiales</taxon>
        <taxon>Nitrobacteraceae</taxon>
        <taxon>Bradyrhizobium</taxon>
    </lineage>
</organism>
<name>CTAA_BRADU</name>
<keyword id="KW-1003">Cell membrane</keyword>
<keyword id="KW-0350">Heme biosynthesis</keyword>
<keyword id="KW-0408">Iron</keyword>
<keyword id="KW-0472">Membrane</keyword>
<keyword id="KW-0479">Metal-binding</keyword>
<keyword id="KW-0560">Oxidoreductase</keyword>
<keyword id="KW-1185">Reference proteome</keyword>
<keyword id="KW-0812">Transmembrane</keyword>
<keyword id="KW-1133">Transmembrane helix</keyword>
<dbReference type="EC" id="1.17.99.9" evidence="1"/>
<dbReference type="EMBL" id="BA000040">
    <property type="protein sequence ID" value="BAC50233.1"/>
    <property type="molecule type" value="Genomic_DNA"/>
</dbReference>
<dbReference type="RefSeq" id="NP_771608.1">
    <property type="nucleotide sequence ID" value="NC_004463.1"/>
</dbReference>
<dbReference type="RefSeq" id="WP_011087731.1">
    <property type="nucleotide sequence ID" value="NC_004463.1"/>
</dbReference>
<dbReference type="SMR" id="Q89KD9"/>
<dbReference type="STRING" id="224911.AAV28_22200"/>
<dbReference type="EnsemblBacteria" id="BAC50233">
    <property type="protein sequence ID" value="BAC50233"/>
    <property type="gene ID" value="BAC50233"/>
</dbReference>
<dbReference type="GeneID" id="46491977"/>
<dbReference type="KEGG" id="bja:bll4968"/>
<dbReference type="PATRIC" id="fig|224911.44.peg.4823"/>
<dbReference type="eggNOG" id="COG1612">
    <property type="taxonomic scope" value="Bacteria"/>
</dbReference>
<dbReference type="HOGENOM" id="CLU_017627_0_0_5"/>
<dbReference type="InParanoid" id="Q89KD9"/>
<dbReference type="OrthoDB" id="9793156at2"/>
<dbReference type="PhylomeDB" id="Q89KD9"/>
<dbReference type="UniPathway" id="UPA00269">
    <property type="reaction ID" value="UER00713"/>
</dbReference>
<dbReference type="Proteomes" id="UP000002526">
    <property type="component" value="Chromosome"/>
</dbReference>
<dbReference type="GO" id="GO:0005886">
    <property type="term" value="C:plasma membrane"/>
    <property type="evidence" value="ECO:0007669"/>
    <property type="project" value="UniProtKB-SubCell"/>
</dbReference>
<dbReference type="GO" id="GO:0046872">
    <property type="term" value="F:metal ion binding"/>
    <property type="evidence" value="ECO:0007669"/>
    <property type="project" value="UniProtKB-KW"/>
</dbReference>
<dbReference type="GO" id="GO:0016653">
    <property type="term" value="F:oxidoreductase activity, acting on NAD(P)H, heme protein as acceptor"/>
    <property type="evidence" value="ECO:0007669"/>
    <property type="project" value="InterPro"/>
</dbReference>
<dbReference type="GO" id="GO:0006784">
    <property type="term" value="P:heme A biosynthetic process"/>
    <property type="evidence" value="ECO:0007669"/>
    <property type="project" value="UniProtKB-UniRule"/>
</dbReference>
<dbReference type="HAMAP" id="MF_01665">
    <property type="entry name" value="HemeA_synth_type2"/>
    <property type="match status" value="1"/>
</dbReference>
<dbReference type="InterPro" id="IPR003780">
    <property type="entry name" value="COX15/CtaA_fam"/>
</dbReference>
<dbReference type="InterPro" id="IPR023754">
    <property type="entry name" value="HemeA_Synthase_type2"/>
</dbReference>
<dbReference type="PANTHER" id="PTHR23289">
    <property type="entry name" value="CYTOCHROME C OXIDASE ASSEMBLY PROTEIN COX15"/>
    <property type="match status" value="1"/>
</dbReference>
<dbReference type="PANTHER" id="PTHR23289:SF2">
    <property type="entry name" value="CYTOCHROME C OXIDASE ASSEMBLY PROTEIN COX15 HOMOLOG"/>
    <property type="match status" value="1"/>
</dbReference>
<dbReference type="Pfam" id="PF02628">
    <property type="entry name" value="COX15-CtaA"/>
    <property type="match status" value="1"/>
</dbReference>
<gene>
    <name evidence="1" type="primary">ctaA</name>
    <name type="synonym">cox15</name>
    <name type="ordered locus">bll4968</name>
</gene>
<protein>
    <recommendedName>
        <fullName evidence="1">Heme A synthase</fullName>
        <shortName evidence="1">HAS</shortName>
        <ecNumber evidence="1">1.17.99.9</ecNumber>
    </recommendedName>
    <alternativeName>
        <fullName evidence="1">Cytochrome aa3-controlling protein</fullName>
    </alternativeName>
</protein>
<feature type="chain" id="PRO_0000349017" description="Heme A synthase">
    <location>
        <begin position="1"/>
        <end position="360"/>
    </location>
</feature>
<feature type="transmembrane region" description="Helical" evidence="1">
    <location>
        <begin position="13"/>
        <end position="33"/>
    </location>
</feature>
<feature type="transmembrane region" description="Helical" evidence="1">
    <location>
        <begin position="99"/>
        <end position="119"/>
    </location>
</feature>
<feature type="transmembrane region" description="Helical" evidence="1">
    <location>
        <begin position="129"/>
        <end position="149"/>
    </location>
</feature>
<feature type="transmembrane region" description="Helical" evidence="1">
    <location>
        <begin position="160"/>
        <end position="180"/>
    </location>
</feature>
<feature type="transmembrane region" description="Helical" evidence="1">
    <location>
        <begin position="199"/>
        <end position="219"/>
    </location>
</feature>
<feature type="transmembrane region" description="Helical" evidence="1">
    <location>
        <begin position="265"/>
        <end position="282"/>
    </location>
</feature>
<feature type="transmembrane region" description="Helical" evidence="1">
    <location>
        <begin position="292"/>
        <end position="312"/>
    </location>
</feature>
<feature type="transmembrane region" description="Helical" evidence="1">
    <location>
        <begin position="315"/>
        <end position="335"/>
    </location>
</feature>
<feature type="binding site" description="axial binding residue" evidence="1">
    <location>
        <position position="263"/>
    </location>
    <ligand>
        <name>heme</name>
        <dbReference type="ChEBI" id="CHEBI:30413"/>
    </ligand>
    <ligandPart>
        <name>Fe</name>
        <dbReference type="ChEBI" id="CHEBI:18248"/>
    </ligandPart>
</feature>
<feature type="binding site" description="axial binding residue" evidence="1">
    <location>
        <position position="323"/>
    </location>
    <ligand>
        <name>heme</name>
        <dbReference type="ChEBI" id="CHEBI:30413"/>
    </ligand>
    <ligandPart>
        <name>Fe</name>
        <dbReference type="ChEBI" id="CHEBI:18248"/>
    </ligandPart>
</feature>
<comment type="function">
    <text evidence="1">Catalyzes the conversion of heme O to heme A by two successive hydroxylations of the methyl group at C8. The first hydroxylation forms heme I, the second hydroxylation results in an unstable dihydroxymethyl group, which spontaneously dehydrates, resulting in the formyl group of heme A.</text>
</comment>
<comment type="catalytic activity">
    <reaction evidence="1">
        <text>Fe(II)-heme o + 2 A + H2O = Fe(II)-heme a + 2 AH2</text>
        <dbReference type="Rhea" id="RHEA:63388"/>
        <dbReference type="ChEBI" id="CHEBI:13193"/>
        <dbReference type="ChEBI" id="CHEBI:15377"/>
        <dbReference type="ChEBI" id="CHEBI:17499"/>
        <dbReference type="ChEBI" id="CHEBI:60530"/>
        <dbReference type="ChEBI" id="CHEBI:61715"/>
        <dbReference type="EC" id="1.17.99.9"/>
    </reaction>
    <physiologicalReaction direction="left-to-right" evidence="1">
        <dbReference type="Rhea" id="RHEA:63389"/>
    </physiologicalReaction>
</comment>
<comment type="cofactor">
    <cofactor evidence="1">
        <name>heme b</name>
        <dbReference type="ChEBI" id="CHEBI:60344"/>
    </cofactor>
</comment>
<comment type="pathway">
    <text evidence="1">Porphyrin-containing compound metabolism; heme A biosynthesis; heme A from heme O: step 1/1.</text>
</comment>
<comment type="subunit">
    <text evidence="1">Interacts with CtaB.</text>
</comment>
<comment type="subcellular location">
    <subcellularLocation>
        <location evidence="1">Cell membrane</location>
        <topology evidence="1">Multi-pass membrane protein</topology>
    </subcellularLocation>
</comment>
<comment type="similarity">
    <text evidence="1">Belongs to the COX15/CtaA family. Type 2 subfamily.</text>
</comment>